<gene>
    <name evidence="1" type="primary">rlmD</name>
    <name type="synonym">rumA</name>
    <name type="ordered locus">Rpic_1053</name>
</gene>
<name>RLMD_RALPJ</name>
<organism>
    <name type="scientific">Ralstonia pickettii (strain 12J)</name>
    <dbReference type="NCBI Taxonomy" id="402626"/>
    <lineage>
        <taxon>Bacteria</taxon>
        <taxon>Pseudomonadati</taxon>
        <taxon>Pseudomonadota</taxon>
        <taxon>Betaproteobacteria</taxon>
        <taxon>Burkholderiales</taxon>
        <taxon>Burkholderiaceae</taxon>
        <taxon>Ralstonia</taxon>
    </lineage>
</organism>
<accession>B2U9U3</accession>
<feature type="chain" id="PRO_1000200847" description="23S rRNA (uracil(1939)-C(5))-methyltransferase RlmD">
    <location>
        <begin position="1"/>
        <end position="450"/>
    </location>
</feature>
<feature type="domain" description="TRAM" evidence="1">
    <location>
        <begin position="1"/>
        <end position="62"/>
    </location>
</feature>
<feature type="active site" description="Nucleophile" evidence="1">
    <location>
        <position position="406"/>
    </location>
</feature>
<feature type="binding site" evidence="1">
    <location>
        <position position="75"/>
    </location>
    <ligand>
        <name>[4Fe-4S] cluster</name>
        <dbReference type="ChEBI" id="CHEBI:49883"/>
    </ligand>
</feature>
<feature type="binding site" evidence="1">
    <location>
        <position position="81"/>
    </location>
    <ligand>
        <name>[4Fe-4S] cluster</name>
        <dbReference type="ChEBI" id="CHEBI:49883"/>
    </ligand>
</feature>
<feature type="binding site" evidence="1">
    <location>
        <position position="84"/>
    </location>
    <ligand>
        <name>[4Fe-4S] cluster</name>
        <dbReference type="ChEBI" id="CHEBI:49883"/>
    </ligand>
</feature>
<feature type="binding site" evidence="1">
    <location>
        <position position="163"/>
    </location>
    <ligand>
        <name>[4Fe-4S] cluster</name>
        <dbReference type="ChEBI" id="CHEBI:49883"/>
    </ligand>
</feature>
<feature type="binding site" evidence="1">
    <location>
        <position position="271"/>
    </location>
    <ligand>
        <name>S-adenosyl-L-methionine</name>
        <dbReference type="ChEBI" id="CHEBI:59789"/>
    </ligand>
</feature>
<feature type="binding site" evidence="1">
    <location>
        <position position="300"/>
    </location>
    <ligand>
        <name>S-adenosyl-L-methionine</name>
        <dbReference type="ChEBI" id="CHEBI:59789"/>
    </ligand>
</feature>
<feature type="binding site" evidence="1">
    <location>
        <position position="305"/>
    </location>
    <ligand>
        <name>S-adenosyl-L-methionine</name>
        <dbReference type="ChEBI" id="CHEBI:59789"/>
    </ligand>
</feature>
<feature type="binding site" evidence="1">
    <location>
        <position position="321"/>
    </location>
    <ligand>
        <name>S-adenosyl-L-methionine</name>
        <dbReference type="ChEBI" id="CHEBI:59789"/>
    </ligand>
</feature>
<feature type="binding site" evidence="1">
    <location>
        <position position="349"/>
    </location>
    <ligand>
        <name>S-adenosyl-L-methionine</name>
        <dbReference type="ChEBI" id="CHEBI:59789"/>
    </ligand>
</feature>
<feature type="binding site" evidence="1">
    <location>
        <position position="370"/>
    </location>
    <ligand>
        <name>S-adenosyl-L-methionine</name>
        <dbReference type="ChEBI" id="CHEBI:59789"/>
    </ligand>
</feature>
<dbReference type="EC" id="2.1.1.190" evidence="1"/>
<dbReference type="EMBL" id="CP001068">
    <property type="protein sequence ID" value="ACD26201.1"/>
    <property type="molecule type" value="Genomic_DNA"/>
</dbReference>
<dbReference type="SMR" id="B2U9U3"/>
<dbReference type="STRING" id="402626.Rpic_1053"/>
<dbReference type="KEGG" id="rpi:Rpic_1053"/>
<dbReference type="PATRIC" id="fig|402626.5.peg.2257"/>
<dbReference type="eggNOG" id="COG2265">
    <property type="taxonomic scope" value="Bacteria"/>
</dbReference>
<dbReference type="HOGENOM" id="CLU_014689_8_2_4"/>
<dbReference type="GO" id="GO:0051539">
    <property type="term" value="F:4 iron, 4 sulfur cluster binding"/>
    <property type="evidence" value="ECO:0007669"/>
    <property type="project" value="UniProtKB-KW"/>
</dbReference>
<dbReference type="GO" id="GO:0005506">
    <property type="term" value="F:iron ion binding"/>
    <property type="evidence" value="ECO:0007669"/>
    <property type="project" value="UniProtKB-UniRule"/>
</dbReference>
<dbReference type="GO" id="GO:0003723">
    <property type="term" value="F:RNA binding"/>
    <property type="evidence" value="ECO:0007669"/>
    <property type="project" value="InterPro"/>
</dbReference>
<dbReference type="GO" id="GO:0070041">
    <property type="term" value="F:rRNA (uridine-C5-)-methyltransferase activity"/>
    <property type="evidence" value="ECO:0007669"/>
    <property type="project" value="UniProtKB-UniRule"/>
</dbReference>
<dbReference type="GO" id="GO:0070475">
    <property type="term" value="P:rRNA base methylation"/>
    <property type="evidence" value="ECO:0007669"/>
    <property type="project" value="TreeGrafter"/>
</dbReference>
<dbReference type="CDD" id="cd02440">
    <property type="entry name" value="AdoMet_MTases"/>
    <property type="match status" value="1"/>
</dbReference>
<dbReference type="Gene3D" id="2.40.50.1070">
    <property type="match status" value="1"/>
</dbReference>
<dbReference type="Gene3D" id="2.40.50.140">
    <property type="entry name" value="Nucleic acid-binding proteins"/>
    <property type="match status" value="1"/>
</dbReference>
<dbReference type="Gene3D" id="3.40.50.150">
    <property type="entry name" value="Vaccinia Virus protein VP39"/>
    <property type="match status" value="1"/>
</dbReference>
<dbReference type="HAMAP" id="MF_01010">
    <property type="entry name" value="23SrRNA_methyltr_RlmD"/>
    <property type="match status" value="1"/>
</dbReference>
<dbReference type="InterPro" id="IPR001566">
    <property type="entry name" value="23S_rRNA_MeTrfase_RlmD"/>
</dbReference>
<dbReference type="InterPro" id="IPR030391">
    <property type="entry name" value="MeTrfase_TrmA_CS"/>
</dbReference>
<dbReference type="InterPro" id="IPR012340">
    <property type="entry name" value="NA-bd_OB-fold"/>
</dbReference>
<dbReference type="InterPro" id="IPR029063">
    <property type="entry name" value="SAM-dependent_MTases_sf"/>
</dbReference>
<dbReference type="InterPro" id="IPR002792">
    <property type="entry name" value="TRAM_dom"/>
</dbReference>
<dbReference type="InterPro" id="IPR010280">
    <property type="entry name" value="U5_MeTrfase_fam"/>
</dbReference>
<dbReference type="NCBIfam" id="NF009639">
    <property type="entry name" value="PRK13168.1"/>
    <property type="match status" value="1"/>
</dbReference>
<dbReference type="PANTHER" id="PTHR11061:SF49">
    <property type="entry name" value="23S RRNA (URACIL(1939)-C(5))-METHYLTRANSFERASE RLMD"/>
    <property type="match status" value="1"/>
</dbReference>
<dbReference type="PANTHER" id="PTHR11061">
    <property type="entry name" value="RNA M5U METHYLTRANSFERASE"/>
    <property type="match status" value="1"/>
</dbReference>
<dbReference type="Pfam" id="PF05958">
    <property type="entry name" value="tRNA_U5-meth_tr"/>
    <property type="match status" value="1"/>
</dbReference>
<dbReference type="SUPFAM" id="SSF50249">
    <property type="entry name" value="Nucleic acid-binding proteins"/>
    <property type="match status" value="1"/>
</dbReference>
<dbReference type="SUPFAM" id="SSF53335">
    <property type="entry name" value="S-adenosyl-L-methionine-dependent methyltransferases"/>
    <property type="match status" value="1"/>
</dbReference>
<dbReference type="PROSITE" id="PS51687">
    <property type="entry name" value="SAM_MT_RNA_M5U"/>
    <property type="match status" value="1"/>
</dbReference>
<dbReference type="PROSITE" id="PS50926">
    <property type="entry name" value="TRAM"/>
    <property type="match status" value="1"/>
</dbReference>
<dbReference type="PROSITE" id="PS01231">
    <property type="entry name" value="TRMA_2"/>
    <property type="match status" value="1"/>
</dbReference>
<reference key="1">
    <citation type="submission" date="2008-05" db="EMBL/GenBank/DDBJ databases">
        <title>Complete sequence of chromosome 1 of Ralstonia pickettii 12J.</title>
        <authorList>
            <person name="Lucas S."/>
            <person name="Copeland A."/>
            <person name="Lapidus A."/>
            <person name="Glavina del Rio T."/>
            <person name="Dalin E."/>
            <person name="Tice H."/>
            <person name="Bruce D."/>
            <person name="Goodwin L."/>
            <person name="Pitluck S."/>
            <person name="Meincke L."/>
            <person name="Brettin T."/>
            <person name="Detter J.C."/>
            <person name="Han C."/>
            <person name="Kuske C.R."/>
            <person name="Schmutz J."/>
            <person name="Larimer F."/>
            <person name="Land M."/>
            <person name="Hauser L."/>
            <person name="Kyrpides N."/>
            <person name="Mikhailova N."/>
            <person name="Marsh T."/>
            <person name="Richardson P."/>
        </authorList>
    </citation>
    <scope>NUCLEOTIDE SEQUENCE [LARGE SCALE GENOMIC DNA]</scope>
    <source>
        <strain>12J</strain>
    </source>
</reference>
<comment type="function">
    <text evidence="1">Catalyzes the formation of 5-methyl-uridine at position 1939 (m5U1939) in 23S rRNA.</text>
</comment>
<comment type="catalytic activity">
    <reaction evidence="1">
        <text>uridine(1939) in 23S rRNA + S-adenosyl-L-methionine = 5-methyluridine(1939) in 23S rRNA + S-adenosyl-L-homocysteine + H(+)</text>
        <dbReference type="Rhea" id="RHEA:42908"/>
        <dbReference type="Rhea" id="RHEA-COMP:10278"/>
        <dbReference type="Rhea" id="RHEA-COMP:10279"/>
        <dbReference type="ChEBI" id="CHEBI:15378"/>
        <dbReference type="ChEBI" id="CHEBI:57856"/>
        <dbReference type="ChEBI" id="CHEBI:59789"/>
        <dbReference type="ChEBI" id="CHEBI:65315"/>
        <dbReference type="ChEBI" id="CHEBI:74447"/>
        <dbReference type="EC" id="2.1.1.190"/>
    </reaction>
</comment>
<comment type="similarity">
    <text evidence="1">Belongs to the class I-like SAM-binding methyltransferase superfamily. RNA M5U methyltransferase family. RlmD subfamily.</text>
</comment>
<keyword id="KW-0004">4Fe-4S</keyword>
<keyword id="KW-0408">Iron</keyword>
<keyword id="KW-0411">Iron-sulfur</keyword>
<keyword id="KW-0479">Metal-binding</keyword>
<keyword id="KW-0489">Methyltransferase</keyword>
<keyword id="KW-0698">rRNA processing</keyword>
<keyword id="KW-0949">S-adenosyl-L-methionine</keyword>
<keyword id="KW-0808">Transferase</keyword>
<evidence type="ECO:0000255" key="1">
    <source>
        <dbReference type="HAMAP-Rule" id="MF_01010"/>
    </source>
</evidence>
<sequence length="450" mass="49488">MPVAGPLDIVSLDGEARGIGRLTNEDGTPGKVVFVEGALPGERVMYRSHRVKPSYEQAGVVNILRQSASRVTPQCKFFGVCGGCSMQHLDSRAQVAIKQRVLEDDLWHLAKLRPDVVFRPIAGPDWGYRYRARLTVRHVAAKGGVLVGFHERKSSYVADMTSCEVLPPHVSALLVPLRELVGRLSIVQRMPQIELAVGQDVTALVLRNLEPITAEDEAELRAFADHHNIQFWLQPKGPDTVYPFYPLDRTLTYTLPEFGITMPFKPTDFTQVNHQINRVLMSRALKLLDAQPGDRLLDLFCGIGNFTLPMATRAREVMGIEGSEALTTRALANAQHNGLHTKTSFACRNLFEVSADDVAALGKFDRWLIDPPREGALAVSKALAELSQSGGDAADLLPKRIIYVSCNPATLARDAGLLVHEAGYRLAGAGVVNMFPHTSHVESMAVFERD</sequence>
<protein>
    <recommendedName>
        <fullName evidence="1">23S rRNA (uracil(1939)-C(5))-methyltransferase RlmD</fullName>
        <ecNumber evidence="1">2.1.1.190</ecNumber>
    </recommendedName>
    <alternativeName>
        <fullName evidence="1">23S rRNA(m5U1939)-methyltransferase</fullName>
    </alternativeName>
</protein>
<proteinExistence type="inferred from homology"/>